<reference key="1">
    <citation type="journal article" date="2000" name="Mamm. Genome">
        <title>Transcriptional analysis of the 69-kb sequence centromeric to HLA-J: a dense and complex structure of five genes.</title>
        <authorList>
            <person name="Coriton O."/>
            <person name="Lepourcelet M."/>
            <person name="Hampe A."/>
            <person name="Galibert F."/>
            <person name="Mosser J."/>
        </authorList>
    </citation>
    <scope>NUCLEOTIDE SEQUENCE [MRNA] (ISOFORMS 1; 2 AND 3)</scope>
    <scope>VARIANT ASN-268</scope>
    <scope>TISSUE SPECIFICITY</scope>
    <source>
        <tissue>Testis</tissue>
    </source>
</reference>
<reference key="2">
    <citation type="journal article" date="2003" name="Nature">
        <title>The DNA sequence and analysis of human chromosome 6.</title>
        <authorList>
            <person name="Mungall A.J."/>
            <person name="Palmer S.A."/>
            <person name="Sims S.K."/>
            <person name="Edwards C.A."/>
            <person name="Ashurst J.L."/>
            <person name="Wilming L."/>
            <person name="Jones M.C."/>
            <person name="Horton R."/>
            <person name="Hunt S.E."/>
            <person name="Scott C.E."/>
            <person name="Gilbert J.G.R."/>
            <person name="Clamp M.E."/>
            <person name="Bethel G."/>
            <person name="Milne S."/>
            <person name="Ainscough R."/>
            <person name="Almeida J.P."/>
            <person name="Ambrose K.D."/>
            <person name="Andrews T.D."/>
            <person name="Ashwell R.I.S."/>
            <person name="Babbage A.K."/>
            <person name="Bagguley C.L."/>
            <person name="Bailey J."/>
            <person name="Banerjee R."/>
            <person name="Barker D.J."/>
            <person name="Barlow K.F."/>
            <person name="Bates K."/>
            <person name="Beare D.M."/>
            <person name="Beasley H."/>
            <person name="Beasley O."/>
            <person name="Bird C.P."/>
            <person name="Blakey S.E."/>
            <person name="Bray-Allen S."/>
            <person name="Brook J."/>
            <person name="Brown A.J."/>
            <person name="Brown J.Y."/>
            <person name="Burford D.C."/>
            <person name="Burrill W."/>
            <person name="Burton J."/>
            <person name="Carder C."/>
            <person name="Carter N.P."/>
            <person name="Chapman J.C."/>
            <person name="Clark S.Y."/>
            <person name="Clark G."/>
            <person name="Clee C.M."/>
            <person name="Clegg S."/>
            <person name="Cobley V."/>
            <person name="Collier R.E."/>
            <person name="Collins J.E."/>
            <person name="Colman L.K."/>
            <person name="Corby N.R."/>
            <person name="Coville G.J."/>
            <person name="Culley K.M."/>
            <person name="Dhami P."/>
            <person name="Davies J."/>
            <person name="Dunn M."/>
            <person name="Earthrowl M.E."/>
            <person name="Ellington A.E."/>
            <person name="Evans K.A."/>
            <person name="Faulkner L."/>
            <person name="Francis M.D."/>
            <person name="Frankish A."/>
            <person name="Frankland J."/>
            <person name="French L."/>
            <person name="Garner P."/>
            <person name="Garnett J."/>
            <person name="Ghori M.J."/>
            <person name="Gilby L.M."/>
            <person name="Gillson C.J."/>
            <person name="Glithero R.J."/>
            <person name="Grafham D.V."/>
            <person name="Grant M."/>
            <person name="Gribble S."/>
            <person name="Griffiths C."/>
            <person name="Griffiths M.N.D."/>
            <person name="Hall R."/>
            <person name="Halls K.S."/>
            <person name="Hammond S."/>
            <person name="Harley J.L."/>
            <person name="Hart E.A."/>
            <person name="Heath P.D."/>
            <person name="Heathcott R."/>
            <person name="Holmes S.J."/>
            <person name="Howden P.J."/>
            <person name="Howe K.L."/>
            <person name="Howell G.R."/>
            <person name="Huckle E."/>
            <person name="Humphray S.J."/>
            <person name="Humphries M.D."/>
            <person name="Hunt A.R."/>
            <person name="Johnson C.M."/>
            <person name="Joy A.A."/>
            <person name="Kay M."/>
            <person name="Keenan S.J."/>
            <person name="Kimberley A.M."/>
            <person name="King A."/>
            <person name="Laird G.K."/>
            <person name="Langford C."/>
            <person name="Lawlor S."/>
            <person name="Leongamornlert D.A."/>
            <person name="Leversha M."/>
            <person name="Lloyd C.R."/>
            <person name="Lloyd D.M."/>
            <person name="Loveland J.E."/>
            <person name="Lovell J."/>
            <person name="Martin S."/>
            <person name="Mashreghi-Mohammadi M."/>
            <person name="Maslen G.L."/>
            <person name="Matthews L."/>
            <person name="McCann O.T."/>
            <person name="McLaren S.J."/>
            <person name="McLay K."/>
            <person name="McMurray A."/>
            <person name="Moore M.J.F."/>
            <person name="Mullikin J.C."/>
            <person name="Niblett D."/>
            <person name="Nickerson T."/>
            <person name="Novik K.L."/>
            <person name="Oliver K."/>
            <person name="Overton-Larty E.K."/>
            <person name="Parker A."/>
            <person name="Patel R."/>
            <person name="Pearce A.V."/>
            <person name="Peck A.I."/>
            <person name="Phillimore B.J.C.T."/>
            <person name="Phillips S."/>
            <person name="Plumb R.W."/>
            <person name="Porter K.M."/>
            <person name="Ramsey Y."/>
            <person name="Ranby S.A."/>
            <person name="Rice C.M."/>
            <person name="Ross M.T."/>
            <person name="Searle S.M."/>
            <person name="Sehra H.K."/>
            <person name="Sheridan E."/>
            <person name="Skuce C.D."/>
            <person name="Smith S."/>
            <person name="Smith M."/>
            <person name="Spraggon L."/>
            <person name="Squares S.L."/>
            <person name="Steward C.A."/>
            <person name="Sycamore N."/>
            <person name="Tamlyn-Hall G."/>
            <person name="Tester J."/>
            <person name="Theaker A.J."/>
            <person name="Thomas D.W."/>
            <person name="Thorpe A."/>
            <person name="Tracey A."/>
            <person name="Tromans A."/>
            <person name="Tubby B."/>
            <person name="Wall M."/>
            <person name="Wallis J.M."/>
            <person name="West A.P."/>
            <person name="White S.S."/>
            <person name="Whitehead S.L."/>
            <person name="Whittaker H."/>
            <person name="Wild A."/>
            <person name="Willey D.J."/>
            <person name="Wilmer T.E."/>
            <person name="Wood J.M."/>
            <person name="Wray P.W."/>
            <person name="Wyatt J.C."/>
            <person name="Young L."/>
            <person name="Younger R.M."/>
            <person name="Bentley D.R."/>
            <person name="Coulson A."/>
            <person name="Durbin R.M."/>
            <person name="Hubbard T."/>
            <person name="Sulston J.E."/>
            <person name="Dunham I."/>
            <person name="Rogers J."/>
            <person name="Beck S."/>
        </authorList>
    </citation>
    <scope>NUCLEOTIDE SEQUENCE [LARGE SCALE GENOMIC DNA]</scope>
    <scope>VARIANTS PRO-203; THR-245; ASN-268 AND GLU-304</scope>
</reference>
<reference key="3">
    <citation type="submission" date="2005-07" db="EMBL/GenBank/DDBJ databases">
        <authorList>
            <person name="Mural R.J."/>
            <person name="Istrail S."/>
            <person name="Sutton G.G."/>
            <person name="Florea L."/>
            <person name="Halpern A.L."/>
            <person name="Mobarry C.M."/>
            <person name="Lippert R."/>
            <person name="Walenz B."/>
            <person name="Shatkay H."/>
            <person name="Dew I."/>
            <person name="Miller J.R."/>
            <person name="Flanigan M.J."/>
            <person name="Edwards N.J."/>
            <person name="Bolanos R."/>
            <person name="Fasulo D."/>
            <person name="Halldorsson B.V."/>
            <person name="Hannenhalli S."/>
            <person name="Turner R."/>
            <person name="Yooseph S."/>
            <person name="Lu F."/>
            <person name="Nusskern D.R."/>
            <person name="Shue B.C."/>
            <person name="Zheng X.H."/>
            <person name="Zhong F."/>
            <person name="Delcher A.L."/>
            <person name="Huson D.H."/>
            <person name="Kravitz S.A."/>
            <person name="Mouchard L."/>
            <person name="Reinert K."/>
            <person name="Remington K.A."/>
            <person name="Clark A.G."/>
            <person name="Waterman M.S."/>
            <person name="Eichler E.E."/>
            <person name="Adams M.D."/>
            <person name="Hunkapiller M.W."/>
            <person name="Myers E.W."/>
            <person name="Venter J.C."/>
        </authorList>
    </citation>
    <scope>NUCLEOTIDE SEQUENCE [LARGE SCALE GENOMIC DNA]</scope>
</reference>
<reference key="4">
    <citation type="journal article" date="2014" name="Cell Biosci.">
        <title>Ring finger protein 39 genetic variants associate with HIV-1 plasma viral loads and its replication in cell culture.</title>
        <authorList>
            <person name="Lin Y.J."/>
            <person name="Chen C.Y."/>
            <person name="Jeang K.T."/>
            <person name="Liu X."/>
            <person name="Wang J.H."/>
            <person name="Hung C.H."/>
            <person name="Tsang H."/>
            <person name="Lin T.H."/>
            <person name="Liao C.C."/>
            <person name="Huang S.M."/>
            <person name="Lin C.W."/>
            <person name="Ho M.W."/>
            <person name="Chien W.K."/>
            <person name="Chen J.H."/>
            <person name="Ho T.J."/>
            <person name="Tsai F.J."/>
        </authorList>
    </citation>
    <scope>FUNCTION (MICROBIAL INFECTION)</scope>
</reference>
<reference key="5">
    <citation type="journal article" date="2021" name="Sci. Adv.">
        <title>RNF39 mediates K48-linked ubiquitination of DDX3X and inhibits RLR-dependent antiviral immunity.</title>
        <authorList>
            <person name="Wang W."/>
            <person name="Jia M."/>
            <person name="Zhao C."/>
            <person name="Yu Z."/>
            <person name="Song H."/>
            <person name="Qin Y."/>
            <person name="Zhao W."/>
        </authorList>
    </citation>
    <scope>FUNCTION</scope>
    <scope>CATALYTIC ACTIVITY</scope>
    <scope>MUTAGENESIS OF CYS-108</scope>
    <scope>SUBCELLULAR LOCATION</scope>
</reference>
<reference key="6">
    <citation type="journal article" date="2024" name="Int. Immunopharmacol.">
        <title>RNF39 facilitates antiviral immune responses by promoting K63-linked ubiquitination of STING.</title>
        <authorList>
            <person name="Wang W."/>
            <person name="Li Q."/>
            <person name="Jia M."/>
            <person name="Wang C."/>
            <person name="Liang W."/>
            <person name="Liu Y."/>
            <person name="Kong H."/>
            <person name="Qin Y."/>
            <person name="Zhao C."/>
            <person name="Zhao W."/>
            <person name="Song H."/>
        </authorList>
    </citation>
    <scope>FUNCTION</scope>
    <scope>MUTAGENESIS OF CYS-108</scope>
    <scope>CATALYTIC ACTIVITY</scope>
</reference>
<evidence type="ECO:0000255" key="1">
    <source>
        <dbReference type="PROSITE-ProRule" id="PRU00175"/>
    </source>
</evidence>
<evidence type="ECO:0000255" key="2">
    <source>
        <dbReference type="PROSITE-ProRule" id="PRU00548"/>
    </source>
</evidence>
<evidence type="ECO:0000269" key="3">
    <source>
    </source>
</evidence>
<evidence type="ECO:0000269" key="4">
    <source>
    </source>
</evidence>
<evidence type="ECO:0000269" key="5">
    <source>
    </source>
</evidence>
<evidence type="ECO:0000269" key="6">
    <source>
    </source>
</evidence>
<evidence type="ECO:0000269" key="7">
    <source>
    </source>
</evidence>
<evidence type="ECO:0000303" key="8">
    <source>
    </source>
</evidence>
<evidence type="ECO:0000305" key="9"/>
<keyword id="KW-0025">Alternative splicing</keyword>
<keyword id="KW-0963">Cytoplasm</keyword>
<keyword id="KW-0479">Metal-binding</keyword>
<keyword id="KW-1267">Proteomics identification</keyword>
<keyword id="KW-1185">Reference proteome</keyword>
<keyword id="KW-0808">Transferase</keyword>
<keyword id="KW-0862">Zinc</keyword>
<keyword id="KW-0863">Zinc-finger</keyword>
<gene>
    <name type="primary">RNF39</name>
    <name type="synonym">HZFW</name>
</gene>
<proteinExistence type="evidence at protein level"/>
<accession>Q9H2S5</accession>
<accession>A2BEK3</accession>
<accession>A6NCD6</accession>
<accession>B0S858</accession>
<accession>Q5SPM8</accession>
<accession>Q5SPM9</accession>
<accession>Q5SPN0</accession>
<accession>Q5SRJ9</accession>
<accession>Q5SRK1</accession>
<accession>Q5SS29</accession>
<accession>Q9H2S3</accession>
<accession>Q9H2S4</accession>
<protein>
    <recommendedName>
        <fullName>RING finger protein 39</fullName>
        <ecNumber evidence="6 7">2.3.2.27</ecNumber>
    </recommendedName>
    <alternativeName>
        <fullName>Protein HZFw</fullName>
    </alternativeName>
</protein>
<name>RNF39_HUMAN</name>
<organism>
    <name type="scientific">Homo sapiens</name>
    <name type="common">Human</name>
    <dbReference type="NCBI Taxonomy" id="9606"/>
    <lineage>
        <taxon>Eukaryota</taxon>
        <taxon>Metazoa</taxon>
        <taxon>Chordata</taxon>
        <taxon>Craniata</taxon>
        <taxon>Vertebrata</taxon>
        <taxon>Euteleostomi</taxon>
        <taxon>Mammalia</taxon>
        <taxon>Eutheria</taxon>
        <taxon>Euarchontoglires</taxon>
        <taxon>Primates</taxon>
        <taxon>Haplorrhini</taxon>
        <taxon>Catarrhini</taxon>
        <taxon>Hominidae</taxon>
        <taxon>Homo</taxon>
    </lineage>
</organism>
<dbReference type="EC" id="2.3.2.27" evidence="6 7"/>
<dbReference type="EMBL" id="AF238315">
    <property type="protein sequence ID" value="AAG40628.1"/>
    <property type="molecule type" value="mRNA"/>
</dbReference>
<dbReference type="EMBL" id="AF238316">
    <property type="protein sequence ID" value="AAG40629.1"/>
    <property type="molecule type" value="mRNA"/>
</dbReference>
<dbReference type="EMBL" id="AF238317">
    <property type="protein sequence ID" value="AAG40630.1"/>
    <property type="status" value="ALT_FRAME"/>
    <property type="molecule type" value="mRNA"/>
</dbReference>
<dbReference type="EMBL" id="AL669914">
    <property type="status" value="NOT_ANNOTATED_CDS"/>
    <property type="molecule type" value="Genomic_DNA"/>
</dbReference>
<dbReference type="EMBL" id="AL671859">
    <property type="status" value="NOT_ANNOTATED_CDS"/>
    <property type="molecule type" value="Genomic_DNA"/>
</dbReference>
<dbReference type="EMBL" id="AL845439">
    <property type="status" value="NOT_ANNOTATED_CDS"/>
    <property type="molecule type" value="Genomic_DNA"/>
</dbReference>
<dbReference type="EMBL" id="BX088647">
    <property type="status" value="NOT_ANNOTATED_CDS"/>
    <property type="molecule type" value="Genomic_DNA"/>
</dbReference>
<dbReference type="EMBL" id="BX927229">
    <property type="status" value="NOT_ANNOTATED_CDS"/>
    <property type="molecule type" value="Genomic_DNA"/>
</dbReference>
<dbReference type="EMBL" id="CR388205">
    <property type="status" value="NOT_ANNOTATED_CDS"/>
    <property type="molecule type" value="Genomic_DNA"/>
</dbReference>
<dbReference type="EMBL" id="CR759763">
    <property type="status" value="NOT_ANNOTATED_CDS"/>
    <property type="molecule type" value="Genomic_DNA"/>
</dbReference>
<dbReference type="EMBL" id="CR759960">
    <property type="status" value="NOT_ANNOTATED_CDS"/>
    <property type="molecule type" value="Genomic_DNA"/>
</dbReference>
<dbReference type="EMBL" id="CR933538">
    <property type="status" value="NOT_ANNOTATED_CDS"/>
    <property type="molecule type" value="Genomic_DNA"/>
</dbReference>
<dbReference type="EMBL" id="CH471081">
    <property type="protein sequence ID" value="EAX03256.1"/>
    <property type="molecule type" value="Genomic_DNA"/>
</dbReference>
<dbReference type="RefSeq" id="NP_079512.2">
    <property type="nucleotide sequence ID" value="NM_025236.3"/>
</dbReference>
<dbReference type="RefSeq" id="NP_739575.2">
    <property type="nucleotide sequence ID" value="NM_170769.2"/>
</dbReference>
<dbReference type="SMR" id="Q9H2S5"/>
<dbReference type="BioGRID" id="123258">
    <property type="interactions" value="13"/>
</dbReference>
<dbReference type="FunCoup" id="Q9H2S5">
    <property type="interactions" value="4"/>
</dbReference>
<dbReference type="IntAct" id="Q9H2S5">
    <property type="interactions" value="7"/>
</dbReference>
<dbReference type="STRING" id="9606.ENSP00000244360"/>
<dbReference type="GlyGen" id="Q9H2S5">
    <property type="glycosylation" value="1 site"/>
</dbReference>
<dbReference type="iPTMnet" id="Q9H2S5"/>
<dbReference type="PhosphoSitePlus" id="Q9H2S5"/>
<dbReference type="BioMuta" id="RNF39"/>
<dbReference type="DMDM" id="68053317"/>
<dbReference type="jPOST" id="Q9H2S5"/>
<dbReference type="MassIVE" id="Q9H2S5"/>
<dbReference type="PaxDb" id="9606-ENSP00000244360"/>
<dbReference type="PeptideAtlas" id="Q9H2S5"/>
<dbReference type="ProteomicsDB" id="80584">
    <molecule id="Q9H2S5-1"/>
</dbReference>
<dbReference type="ProteomicsDB" id="80585">
    <molecule id="Q9H2S5-2"/>
</dbReference>
<dbReference type="ProteomicsDB" id="80586">
    <molecule id="Q9H2S5-3"/>
</dbReference>
<dbReference type="Antibodypedia" id="44916">
    <property type="antibodies" value="251 antibodies from 26 providers"/>
</dbReference>
<dbReference type="DNASU" id="80352"/>
<dbReference type="Ensembl" id="ENST00000244360.8">
    <property type="protein sequence ID" value="ENSP00000244360.7"/>
    <property type="gene ID" value="ENSG00000204618.10"/>
</dbReference>
<dbReference type="Ensembl" id="ENST00000376750.6">
    <property type="protein sequence ID" value="ENSP00000365941.2"/>
    <property type="gene ID" value="ENSG00000206500.9"/>
</dbReference>
<dbReference type="Ensembl" id="ENST00000376751.8">
    <property type="protein sequence ID" value="ENSP00000365942.4"/>
    <property type="gene ID" value="ENSG00000204618.10"/>
</dbReference>
<dbReference type="Ensembl" id="ENST00000417541.6">
    <property type="protein sequence ID" value="ENSP00000407248.2"/>
    <property type="gene ID" value="ENSG00000237733.8"/>
</dbReference>
<dbReference type="Ensembl" id="ENST00000425956.6">
    <molecule id="Q9H2S5-1"/>
    <property type="protein sequence ID" value="ENSP00000393560.2"/>
    <property type="gene ID" value="ENSG00000227171.8"/>
</dbReference>
<dbReference type="Ensembl" id="ENST00000432647.2">
    <molecule id="Q9H2S5-1"/>
    <property type="protein sequence ID" value="ENSP00000398512.2"/>
    <property type="gene ID" value="ENSG00000230332.8"/>
</dbReference>
<dbReference type="Ensembl" id="ENST00000441449.6">
    <molecule id="Q9H2S5-2"/>
    <property type="protein sequence ID" value="ENSP00000392508.2"/>
    <property type="gene ID" value="ENSG00000236967.8"/>
</dbReference>
<dbReference type="Ensembl" id="ENST00000442063.2">
    <molecule id="Q9H2S5-2"/>
    <property type="protein sequence ID" value="ENSP00000415281.2"/>
    <property type="gene ID" value="ENSG00000235022.8"/>
</dbReference>
<dbReference type="Ensembl" id="ENST00000442378.2">
    <molecule id="Q9H2S5-2"/>
    <property type="protein sequence ID" value="ENSP00000401131.2"/>
    <property type="gene ID" value="ENSG00000227171.8"/>
</dbReference>
<dbReference type="Ensembl" id="ENST00000449145.2">
    <property type="protein sequence ID" value="ENSP00000408539.2"/>
    <property type="gene ID" value="ENSG00000237733.8"/>
</dbReference>
<dbReference type="Ensembl" id="ENST00000450015.2">
    <molecule id="Q9H2S5-1"/>
    <property type="protein sequence ID" value="ENSP00000407291.2"/>
    <property type="gene ID" value="ENSG00000236967.8"/>
</dbReference>
<dbReference type="Ensembl" id="ENST00000451425.6">
    <molecule id="Q9H2S5-2"/>
    <property type="protein sequence ID" value="ENSP00000391822.2"/>
    <property type="gene ID" value="ENSG00000230332.8"/>
</dbReference>
<dbReference type="Ensembl" id="ENST00000456156.6">
    <molecule id="Q9H2S5-1"/>
    <property type="protein sequence ID" value="ENSP00000395696.2"/>
    <property type="gene ID" value="ENSG00000235022.8"/>
</dbReference>
<dbReference type="Ensembl" id="ENST00000457092.6">
    <molecule id="Q9H2S5-2"/>
    <property type="protein sequence ID" value="ENSP00000405340.2"/>
    <property type="gene ID" value="ENSG00000230467.8"/>
</dbReference>
<dbReference type="GeneID" id="80352"/>
<dbReference type="KEGG" id="hsa:80352"/>
<dbReference type="MANE-Select" id="ENST00000244360.8">
    <property type="protein sequence ID" value="ENSP00000244360.7"/>
    <property type="RefSeq nucleotide sequence ID" value="NM_025236.4"/>
    <property type="RefSeq protein sequence ID" value="NP_079512.3"/>
</dbReference>
<dbReference type="UCSC" id="uc003npd.4">
    <molecule id="Q9H2S5-1"/>
    <property type="organism name" value="human"/>
</dbReference>
<dbReference type="AGR" id="HGNC:18064"/>
<dbReference type="CTD" id="80352"/>
<dbReference type="DisGeNET" id="80352"/>
<dbReference type="GeneCards" id="RNF39"/>
<dbReference type="HGNC" id="HGNC:18064">
    <property type="gene designation" value="RNF39"/>
</dbReference>
<dbReference type="HPA" id="ENSG00000204618">
    <property type="expression patterns" value="Tissue enhanced (esophagus, skin, vagina)"/>
</dbReference>
<dbReference type="MIM" id="607524">
    <property type="type" value="gene"/>
</dbReference>
<dbReference type="neXtProt" id="NX_Q9H2S5"/>
<dbReference type="PharmGKB" id="PA134949953"/>
<dbReference type="VEuPathDB" id="HostDB:ENSG00000204618"/>
<dbReference type="eggNOG" id="KOG2177">
    <property type="taxonomic scope" value="Eukaryota"/>
</dbReference>
<dbReference type="HOGENOM" id="CLU_013137_7_5_1"/>
<dbReference type="InParanoid" id="Q9H2S5"/>
<dbReference type="OMA" id="HATLRIV"/>
<dbReference type="OrthoDB" id="6270329at2759"/>
<dbReference type="PAN-GO" id="Q9H2S5">
    <property type="GO annotations" value="5 GO annotations based on evolutionary models"/>
</dbReference>
<dbReference type="PhylomeDB" id="Q9H2S5"/>
<dbReference type="TreeFam" id="TF317532"/>
<dbReference type="PathwayCommons" id="Q9H2S5"/>
<dbReference type="SignaLink" id="Q9H2S5"/>
<dbReference type="SIGNOR" id="Q9H2S5"/>
<dbReference type="UniPathway" id="UPA00143"/>
<dbReference type="BioGRID-ORCS" id="80352">
    <property type="hits" value="13 hits in 1189 CRISPR screens"/>
</dbReference>
<dbReference type="ChiTaRS" id="RNF39">
    <property type="organism name" value="human"/>
</dbReference>
<dbReference type="GeneWiki" id="RNF39"/>
<dbReference type="GenomeRNAi" id="80352"/>
<dbReference type="Pharos" id="Q9H2S5">
    <property type="development level" value="Tbio"/>
</dbReference>
<dbReference type="PRO" id="PR:Q9H2S5"/>
<dbReference type="Proteomes" id="UP000005640">
    <property type="component" value="Chromosome 6"/>
</dbReference>
<dbReference type="RNAct" id="Q9H2S5">
    <property type="molecule type" value="protein"/>
</dbReference>
<dbReference type="Bgee" id="ENSG00000204618">
    <property type="expression patterns" value="Expressed in skin of abdomen and 95 other cell types or tissues"/>
</dbReference>
<dbReference type="GO" id="GO:0005737">
    <property type="term" value="C:cytoplasm"/>
    <property type="evidence" value="ECO:0000314"/>
    <property type="project" value="UniProt"/>
</dbReference>
<dbReference type="GO" id="GO:0061630">
    <property type="term" value="F:ubiquitin protein ligase activity"/>
    <property type="evidence" value="ECO:0000314"/>
    <property type="project" value="UniProt"/>
</dbReference>
<dbReference type="GO" id="GO:0008270">
    <property type="term" value="F:zinc ion binding"/>
    <property type="evidence" value="ECO:0007669"/>
    <property type="project" value="UniProtKB-KW"/>
</dbReference>
<dbReference type="GO" id="GO:0045087">
    <property type="term" value="P:innate immune response"/>
    <property type="evidence" value="ECO:0000318"/>
    <property type="project" value="GO_Central"/>
</dbReference>
<dbReference type="GO" id="GO:0039532">
    <property type="term" value="P:negative regulation of cytoplasmic pattern recognition receptor signaling pathway"/>
    <property type="evidence" value="ECO:0000314"/>
    <property type="project" value="UniProt"/>
</dbReference>
<dbReference type="GO" id="GO:0141111">
    <property type="term" value="P:positive regulation of cGAS/STING signaling pathway"/>
    <property type="evidence" value="ECO:0000314"/>
    <property type="project" value="UniProt"/>
</dbReference>
<dbReference type="GO" id="GO:0070534">
    <property type="term" value="P:protein K63-linked ubiquitination"/>
    <property type="evidence" value="ECO:0000314"/>
    <property type="project" value="UniProt"/>
</dbReference>
<dbReference type="CDD" id="cd16592">
    <property type="entry name" value="RING-HC_RNF39"/>
    <property type="match status" value="1"/>
</dbReference>
<dbReference type="CDD" id="cd12888">
    <property type="entry name" value="SPRY_PRY_TRIM7_like"/>
    <property type="match status" value="1"/>
</dbReference>
<dbReference type="Gene3D" id="2.60.120.920">
    <property type="match status" value="1"/>
</dbReference>
<dbReference type="Gene3D" id="3.30.40.10">
    <property type="entry name" value="Zinc/RING finger domain, C3HC4 (zinc finger)"/>
    <property type="match status" value="1"/>
</dbReference>
<dbReference type="InterPro" id="IPR001870">
    <property type="entry name" value="B30.2/SPRY"/>
</dbReference>
<dbReference type="InterPro" id="IPR043136">
    <property type="entry name" value="B30.2/SPRY_sf"/>
</dbReference>
<dbReference type="InterPro" id="IPR003879">
    <property type="entry name" value="Butyrophylin_SPRY"/>
</dbReference>
<dbReference type="InterPro" id="IPR013320">
    <property type="entry name" value="ConA-like_dom_sf"/>
</dbReference>
<dbReference type="InterPro" id="IPR006574">
    <property type="entry name" value="PRY"/>
</dbReference>
<dbReference type="InterPro" id="IPR003877">
    <property type="entry name" value="SPRY_dom"/>
</dbReference>
<dbReference type="InterPro" id="IPR050143">
    <property type="entry name" value="TRIM/RBCC"/>
</dbReference>
<dbReference type="InterPro" id="IPR027370">
    <property type="entry name" value="Znf-RING_euk"/>
</dbReference>
<dbReference type="InterPro" id="IPR001841">
    <property type="entry name" value="Znf_RING"/>
</dbReference>
<dbReference type="InterPro" id="IPR013083">
    <property type="entry name" value="Znf_RING/FYVE/PHD"/>
</dbReference>
<dbReference type="InterPro" id="IPR017907">
    <property type="entry name" value="Znf_RING_CS"/>
</dbReference>
<dbReference type="PANTHER" id="PTHR24103">
    <property type="entry name" value="E3 UBIQUITIN-PROTEIN LIGASE TRIM"/>
    <property type="match status" value="1"/>
</dbReference>
<dbReference type="Pfam" id="PF13765">
    <property type="entry name" value="PRY"/>
    <property type="match status" value="1"/>
</dbReference>
<dbReference type="Pfam" id="PF00622">
    <property type="entry name" value="SPRY"/>
    <property type="match status" value="1"/>
</dbReference>
<dbReference type="Pfam" id="PF13445">
    <property type="entry name" value="zf-RING_UBOX"/>
    <property type="match status" value="1"/>
</dbReference>
<dbReference type="PRINTS" id="PR01407">
    <property type="entry name" value="BUTYPHLNCDUF"/>
</dbReference>
<dbReference type="SMART" id="SM00589">
    <property type="entry name" value="PRY"/>
    <property type="match status" value="1"/>
</dbReference>
<dbReference type="SMART" id="SM00184">
    <property type="entry name" value="RING"/>
    <property type="match status" value="1"/>
</dbReference>
<dbReference type="SMART" id="SM00449">
    <property type="entry name" value="SPRY"/>
    <property type="match status" value="1"/>
</dbReference>
<dbReference type="SUPFAM" id="SSF49899">
    <property type="entry name" value="Concanavalin A-like lectins/glucanases"/>
    <property type="match status" value="1"/>
</dbReference>
<dbReference type="SUPFAM" id="SSF57850">
    <property type="entry name" value="RING/U-box"/>
    <property type="match status" value="1"/>
</dbReference>
<dbReference type="PROSITE" id="PS50188">
    <property type="entry name" value="B302_SPRY"/>
    <property type="match status" value="1"/>
</dbReference>
<dbReference type="PROSITE" id="PS00518">
    <property type="entry name" value="ZF_RING_1"/>
    <property type="match status" value="1"/>
</dbReference>
<dbReference type="PROSITE" id="PS50089">
    <property type="entry name" value="ZF_RING_2"/>
    <property type="match status" value="1"/>
</dbReference>
<comment type="function">
    <text evidence="6 7">Plays an inhibitory role in anti-RNA viral innate immunity by targeting the adapter DDX3X and promoting its 'Lys-48'-linked polyubiquitination (PubMed:33674311). Alternatively, enhances the cGAS-STING pathway activation by promoting 'Lys-63'-linked ubiquitination of STING1, facilitating the STING1-TBK1 complex formation and STING1 activation (PubMed:39255680).</text>
</comment>
<comment type="function">
    <text evidence="5">(Microbial infection) Plays a positive role in human immunodeficiency virus (HIV-1) replication.</text>
</comment>
<comment type="catalytic activity">
    <reaction evidence="6 7">
        <text>S-ubiquitinyl-[E2 ubiquitin-conjugating enzyme]-L-cysteine + [acceptor protein]-L-lysine = [E2 ubiquitin-conjugating enzyme]-L-cysteine + N(6)-ubiquitinyl-[acceptor protein]-L-lysine.</text>
        <dbReference type="EC" id="2.3.2.27"/>
    </reaction>
</comment>
<comment type="pathway">
    <text>Protein modification; protein ubiquitination.</text>
</comment>
<comment type="interaction">
    <interactant intactId="EBI-12235180">
        <id>Q9H2S5</id>
    </interactant>
    <interactant intactId="EBI-11978055">
        <id>Q10567-3</id>
        <label>AP1B1</label>
    </interactant>
    <organismsDiffer>false</organismsDiffer>
    <experiments>3</experiments>
</comment>
<comment type="interaction">
    <interactant intactId="EBI-12235180">
        <id>Q9H2S5</id>
    </interactant>
    <interactant intactId="EBI-10239299">
        <id>Q9NQM4</id>
        <label>DNAAF6</label>
    </interactant>
    <organismsDiffer>false</organismsDiffer>
    <experiments>3</experiments>
</comment>
<comment type="interaction">
    <interactant intactId="EBI-12235180">
        <id>Q9H2S5</id>
    </interactant>
    <interactant intactId="EBI-5916454">
        <id>A6NEM1</id>
        <label>GOLGA6L9</label>
    </interactant>
    <organismsDiffer>false</organismsDiffer>
    <experiments>3</experiments>
</comment>
<comment type="interaction">
    <interactant intactId="EBI-12235180">
        <id>Q9H2S5</id>
    </interactant>
    <interactant intactId="EBI-3044087">
        <id>Q7Z3Y8</id>
        <label>KRT27</label>
    </interactant>
    <organismsDiffer>false</organismsDiffer>
    <experiments>3</experiments>
</comment>
<comment type="interaction">
    <interactant intactId="EBI-12235180">
        <id>Q9H2S5</id>
    </interactant>
    <interactant intactId="EBI-9675802">
        <id>Q6PF18</id>
        <label>MORN3</label>
    </interactant>
    <organismsDiffer>false</organismsDiffer>
    <experiments>3</experiments>
</comment>
<comment type="interaction">
    <interactant intactId="EBI-12235180">
        <id>Q9H2S5</id>
    </interactant>
    <interactant intactId="EBI-447043">
        <id>Q15276</id>
        <label>RABEP1</label>
    </interactant>
    <organismsDiffer>false</organismsDiffer>
    <experiments>3</experiments>
</comment>
<comment type="interaction">
    <interactant intactId="EBI-12235180">
        <id>Q9H2S5</id>
    </interactant>
    <interactant intactId="EBI-726876">
        <id>Q6NUQ1</id>
        <label>RINT1</label>
    </interactant>
    <organismsDiffer>false</organismsDiffer>
    <experiments>3</experiments>
</comment>
<comment type="subcellular location">
    <subcellularLocation>
        <location evidence="6">Cytoplasm</location>
    </subcellularLocation>
</comment>
<comment type="alternative products">
    <event type="alternative splicing"/>
    <isoform>
        <id>Q9H2S5-1</id>
        <name>1</name>
        <name>HZFW1</name>
        <sequence type="displayed"/>
    </isoform>
    <isoform>
        <id>Q9H2S5-2</id>
        <name>2</name>
        <name>HZFW2</name>
        <sequence type="described" ref="VSP_014242"/>
    </isoform>
    <isoform>
        <id>Q9H2S5-3</id>
        <name>3</name>
        <name>HZFW3</name>
        <sequence type="described" ref="VSP_014240 VSP_014241"/>
    </isoform>
</comment>
<comment type="tissue specificity">
    <text evidence="3">Expressed in testis.</text>
</comment>
<comment type="sequence caution" evidence="9">
    <molecule>Isoform 3</molecule>
    <conflict type="frameshift">
        <sequence resource="EMBL-CDS" id="AAG40630"/>
    </conflict>
</comment>
<sequence length="420" mass="45525">MWWRDLTRLRLWLKREAIPGEGRKAAKVNAGVGEKGIYTASSRGGPPSARSKAVTVVAEGAASRSWLSMDAPELGPGLVERLEQLATCPLCGGSFEDPVLLACEHSFCRACLARRWGTPPATGTEASPTACPCCGLPCPRRSLRSNVRLAVEVRISRELREKLAEPGARAGRRRGGRIPTMGCLDLPGEDMRKTWRRFEVPTSKSSNSEDDLPEDYPVVKKMLHRLTADLTLDPGTAHRRLLISADRRSVQLAPPGTPAPPDGPKRFDQLPAVLGAQGFGAGRHCWEVETADAASCRDSSGEDADDEESHYAVGAAGESVQRKGCVRLCPAGAVWAVEGRGGRLWALTAPEPTLLGGVEPPPRRIRVDLDWERGRVAFYDGRSLDLLYAFQAPGPLGERIFPLFCTCDPRAPLRIVPAES</sequence>
<feature type="chain" id="PRO_0000056080" description="RING finger protein 39">
    <location>
        <begin position="1"/>
        <end position="420"/>
    </location>
</feature>
<feature type="domain" description="B30.2/SPRY" evidence="2">
    <location>
        <begin position="210"/>
        <end position="420"/>
    </location>
</feature>
<feature type="zinc finger region" description="RING-type" evidence="1">
    <location>
        <begin position="88"/>
        <end position="135"/>
    </location>
</feature>
<feature type="splice variant" id="VSP_014240" description="In isoform 3." evidence="8">
    <original>REKLAEPGARAGRRRGGRIPTMGCLDLPGEDMRKTWRRFEVPTSKSSNSEDDLPEDYPVVKKMLHRLTADLTLDPGTAHRRLLISADRRSVQ</original>
    <variation>LFGGGIPHSFLGTHSHAHCRSINSNPHFRPKIMRPHLVSTFPRPCSKPNPFLPSGSQNLLSPTATTVLPDFSHSNHSRPAMGNRPSPSVLVK</variation>
    <location>
        <begin position="160"/>
        <end position="251"/>
    </location>
</feature>
<feature type="splice variant" id="VSP_014241" description="In isoform 3." evidence="8">
    <location>
        <begin position="252"/>
        <end position="420"/>
    </location>
</feature>
<feature type="splice variant" id="VSP_014242" description="In isoform 2." evidence="8">
    <location>
        <begin position="326"/>
        <end position="391"/>
    </location>
</feature>
<feature type="sequence variant" id="VAR_022723" description="In dbSNP:rs2074479." evidence="4">
    <original>S</original>
    <variation>P</variation>
    <location>
        <position position="203"/>
    </location>
</feature>
<feature type="sequence variant" id="VAR_022724" description="In dbSNP:rs2301752." evidence="4">
    <original>A</original>
    <variation>T</variation>
    <location>
        <position position="245"/>
    </location>
</feature>
<feature type="sequence variant" id="VAR_022725" description="In dbSNP:rs1057539." evidence="3 4">
    <original>D</original>
    <variation>N</variation>
    <location>
        <position position="268"/>
    </location>
</feature>
<feature type="sequence variant" id="VAR_022726" description="In dbSNP:rs2301753." evidence="4">
    <original>A</original>
    <variation>E</variation>
    <location>
        <position position="304"/>
    </location>
</feature>
<feature type="mutagenesis site" description="Complete loss of E3 ligase activity." evidence="6 7">
    <original>C</original>
    <variation>S</variation>
    <location>
        <position position="108"/>
    </location>
</feature>